<protein>
    <recommendedName>
        <fullName evidence="1">Probable alpha-L-glutamate ligase</fullName>
        <ecNumber evidence="1">6.3.2.-</ecNumber>
    </recommendedName>
</protein>
<proteinExistence type="inferred from homology"/>
<dbReference type="EC" id="6.3.2.-" evidence="1"/>
<dbReference type="EMBL" id="CP000057">
    <property type="protein sequence ID" value="AAX88404.1"/>
    <property type="molecule type" value="Genomic_DNA"/>
</dbReference>
<dbReference type="RefSeq" id="WP_011272555.1">
    <property type="nucleotide sequence ID" value="NC_007146.2"/>
</dbReference>
<dbReference type="SMR" id="Q4QKP3"/>
<dbReference type="KEGG" id="hit:NTHI1602"/>
<dbReference type="HOGENOM" id="CLU_054353_0_1_6"/>
<dbReference type="Proteomes" id="UP000002525">
    <property type="component" value="Chromosome"/>
</dbReference>
<dbReference type="GO" id="GO:0005737">
    <property type="term" value="C:cytoplasm"/>
    <property type="evidence" value="ECO:0007669"/>
    <property type="project" value="TreeGrafter"/>
</dbReference>
<dbReference type="GO" id="GO:0005524">
    <property type="term" value="F:ATP binding"/>
    <property type="evidence" value="ECO:0007669"/>
    <property type="project" value="UniProtKB-UniRule"/>
</dbReference>
<dbReference type="GO" id="GO:0046872">
    <property type="term" value="F:metal ion binding"/>
    <property type="evidence" value="ECO:0007669"/>
    <property type="project" value="UniProtKB-KW"/>
</dbReference>
<dbReference type="GO" id="GO:0018169">
    <property type="term" value="F:ribosomal S6-glutamic acid ligase activity"/>
    <property type="evidence" value="ECO:0007669"/>
    <property type="project" value="TreeGrafter"/>
</dbReference>
<dbReference type="GO" id="GO:0036211">
    <property type="term" value="P:protein modification process"/>
    <property type="evidence" value="ECO:0007669"/>
    <property type="project" value="InterPro"/>
</dbReference>
<dbReference type="GO" id="GO:0009432">
    <property type="term" value="P:SOS response"/>
    <property type="evidence" value="ECO:0007669"/>
    <property type="project" value="TreeGrafter"/>
</dbReference>
<dbReference type="GO" id="GO:0006412">
    <property type="term" value="P:translation"/>
    <property type="evidence" value="ECO:0007669"/>
    <property type="project" value="UniProtKB-KW"/>
</dbReference>
<dbReference type="FunFam" id="3.30.470.20:FF:000058">
    <property type="entry name" value="Alpha-aminoadipate--LysW ligase LysX protein"/>
    <property type="match status" value="1"/>
</dbReference>
<dbReference type="FunFam" id="3.40.50.20:FF:000047">
    <property type="entry name" value="Probable alpha-L-glutamate ligase"/>
    <property type="match status" value="1"/>
</dbReference>
<dbReference type="Gene3D" id="3.40.50.20">
    <property type="match status" value="1"/>
</dbReference>
<dbReference type="Gene3D" id="3.30.1490.20">
    <property type="entry name" value="ATP-grasp fold, A domain"/>
    <property type="match status" value="1"/>
</dbReference>
<dbReference type="Gene3D" id="3.30.470.20">
    <property type="entry name" value="ATP-grasp fold, B domain"/>
    <property type="match status" value="1"/>
</dbReference>
<dbReference type="HAMAP" id="MF_01552">
    <property type="entry name" value="RimK"/>
    <property type="match status" value="1"/>
</dbReference>
<dbReference type="InterPro" id="IPR011761">
    <property type="entry name" value="ATP-grasp"/>
</dbReference>
<dbReference type="InterPro" id="IPR013651">
    <property type="entry name" value="ATP-grasp_RimK-type"/>
</dbReference>
<dbReference type="InterPro" id="IPR013815">
    <property type="entry name" value="ATP_grasp_subdomain_1"/>
</dbReference>
<dbReference type="InterPro" id="IPR023533">
    <property type="entry name" value="RimK"/>
</dbReference>
<dbReference type="InterPro" id="IPR041107">
    <property type="entry name" value="Rimk_N"/>
</dbReference>
<dbReference type="InterPro" id="IPR004666">
    <property type="entry name" value="Rp_bS6_RimK/Lys_biosynth_LsyX"/>
</dbReference>
<dbReference type="NCBIfam" id="TIGR00768">
    <property type="entry name" value="rimK_fam"/>
    <property type="match status" value="1"/>
</dbReference>
<dbReference type="PANTHER" id="PTHR21621:SF7">
    <property type="entry name" value="RIBOSOMAL PROTEIN BS6--L-GLUTAMATE LIGASE"/>
    <property type="match status" value="1"/>
</dbReference>
<dbReference type="PANTHER" id="PTHR21621">
    <property type="entry name" value="RIBOSOMAL PROTEIN S6 MODIFICATION PROTEIN"/>
    <property type="match status" value="1"/>
</dbReference>
<dbReference type="Pfam" id="PF08443">
    <property type="entry name" value="RimK"/>
    <property type="match status" value="1"/>
</dbReference>
<dbReference type="Pfam" id="PF18030">
    <property type="entry name" value="Rimk_N"/>
    <property type="match status" value="1"/>
</dbReference>
<dbReference type="SUPFAM" id="SSF56059">
    <property type="entry name" value="Glutathione synthetase ATP-binding domain-like"/>
    <property type="match status" value="1"/>
</dbReference>
<dbReference type="PROSITE" id="PS50975">
    <property type="entry name" value="ATP_GRASP"/>
    <property type="match status" value="1"/>
</dbReference>
<gene>
    <name evidence="1" type="primary">rimK</name>
    <name type="ordered locus">NTHI1602</name>
</gene>
<comment type="cofactor">
    <cofactor evidence="1">
        <name>Mg(2+)</name>
        <dbReference type="ChEBI" id="CHEBI:18420"/>
    </cofactor>
    <cofactor evidence="1">
        <name>Mn(2+)</name>
        <dbReference type="ChEBI" id="CHEBI:29035"/>
    </cofactor>
    <text evidence="1">Binds 2 magnesium or manganese ions per subunit.</text>
</comment>
<comment type="similarity">
    <text evidence="1">Belongs to the RimK family.</text>
</comment>
<reference key="1">
    <citation type="journal article" date="2005" name="J. Bacteriol.">
        <title>Genomic sequence of an otitis media isolate of nontypeable Haemophilus influenzae: comparative study with H. influenzae serotype d, strain KW20.</title>
        <authorList>
            <person name="Harrison A."/>
            <person name="Dyer D.W."/>
            <person name="Gillaspy A."/>
            <person name="Ray W.C."/>
            <person name="Mungur R."/>
            <person name="Carson M.B."/>
            <person name="Zhong H."/>
            <person name="Gipson J."/>
            <person name="Gipson M."/>
            <person name="Johnson L.S."/>
            <person name="Lewis L."/>
            <person name="Bakaletz L.O."/>
            <person name="Munson R.S. Jr."/>
        </authorList>
    </citation>
    <scope>NUCLEOTIDE SEQUENCE [LARGE SCALE GENOMIC DNA]</scope>
    <source>
        <strain>86-028NP</strain>
    </source>
</reference>
<organism>
    <name type="scientific">Haemophilus influenzae (strain 86-028NP)</name>
    <dbReference type="NCBI Taxonomy" id="281310"/>
    <lineage>
        <taxon>Bacteria</taxon>
        <taxon>Pseudomonadati</taxon>
        <taxon>Pseudomonadota</taxon>
        <taxon>Gammaproteobacteria</taxon>
        <taxon>Pasteurellales</taxon>
        <taxon>Pasteurellaceae</taxon>
        <taxon>Haemophilus</taxon>
    </lineage>
</organism>
<keyword id="KW-0067">ATP-binding</keyword>
<keyword id="KW-0436">Ligase</keyword>
<keyword id="KW-0460">Magnesium</keyword>
<keyword id="KW-0464">Manganese</keyword>
<keyword id="KW-0479">Metal-binding</keyword>
<keyword id="KW-0547">Nucleotide-binding</keyword>
<keyword id="KW-0648">Protein biosynthesis</keyword>
<sequence>MKLLMLCREPRLYSCQRLKEAAKRQGHEMDILDPNRCLLKLSQNPPHFQIFYQENSGSKPYLLPDYDAVLPRFGTTSTQMGCSVLQHFEGKGTFCLNLSQAFLNARDKWKSLQLLLKTGVPVPNSFLSGGEVQAQATIPHISSPTILKMLNGSQGIGVILAEKPQSAVSIMEAFKQTNISMLQQDFIEEAGNADIRCFVIGDQVVATMQRIGQDGEFRANCHRGGKTEKIILSDDEKQIAIRATKAIGLDVAGVDLIRSKNGLLVLEVNASPGLEMIEKTSGVDIAAEIIDYIEINAFINLR</sequence>
<accession>Q4QKP3</accession>
<evidence type="ECO:0000255" key="1">
    <source>
        <dbReference type="HAMAP-Rule" id="MF_01552"/>
    </source>
</evidence>
<name>RIMK_HAEI8</name>
<feature type="chain" id="PRO_0000205460" description="Probable alpha-L-glutamate ligase">
    <location>
        <begin position="1"/>
        <end position="302"/>
    </location>
</feature>
<feature type="domain" description="ATP-grasp" evidence="1">
    <location>
        <begin position="112"/>
        <end position="294"/>
    </location>
</feature>
<feature type="binding site" evidence="1">
    <location>
        <position position="148"/>
    </location>
    <ligand>
        <name>ATP</name>
        <dbReference type="ChEBI" id="CHEBI:30616"/>
    </ligand>
</feature>
<feature type="binding site" evidence="1">
    <location>
        <begin position="185"/>
        <end position="186"/>
    </location>
    <ligand>
        <name>ATP</name>
        <dbReference type="ChEBI" id="CHEBI:30616"/>
    </ligand>
</feature>
<feature type="binding site" evidence="1">
    <location>
        <position position="194"/>
    </location>
    <ligand>
        <name>ATP</name>
        <dbReference type="ChEBI" id="CHEBI:30616"/>
    </ligand>
</feature>
<feature type="binding site" evidence="1">
    <location>
        <begin position="218"/>
        <end position="220"/>
    </location>
    <ligand>
        <name>ATP</name>
        <dbReference type="ChEBI" id="CHEBI:30616"/>
    </ligand>
</feature>
<feature type="binding site" evidence="1">
    <location>
        <position position="255"/>
    </location>
    <ligand>
        <name>Mg(2+)</name>
        <dbReference type="ChEBI" id="CHEBI:18420"/>
        <label>1</label>
    </ligand>
</feature>
<feature type="binding site" evidence="1">
    <location>
        <position position="255"/>
    </location>
    <ligand>
        <name>Mn(2+)</name>
        <dbReference type="ChEBI" id="CHEBI:29035"/>
        <label>1</label>
    </ligand>
</feature>
<feature type="binding site" evidence="1">
    <location>
        <position position="267"/>
    </location>
    <ligand>
        <name>Mg(2+)</name>
        <dbReference type="ChEBI" id="CHEBI:18420"/>
        <label>1</label>
    </ligand>
</feature>
<feature type="binding site" evidence="1">
    <location>
        <position position="267"/>
    </location>
    <ligand>
        <name>Mg(2+)</name>
        <dbReference type="ChEBI" id="CHEBI:18420"/>
        <label>2</label>
    </ligand>
</feature>
<feature type="binding site" evidence="1">
    <location>
        <position position="267"/>
    </location>
    <ligand>
        <name>Mn(2+)</name>
        <dbReference type="ChEBI" id="CHEBI:29035"/>
        <label>1</label>
    </ligand>
</feature>
<feature type="binding site" evidence="1">
    <location>
        <position position="267"/>
    </location>
    <ligand>
        <name>Mn(2+)</name>
        <dbReference type="ChEBI" id="CHEBI:29035"/>
        <label>2</label>
    </ligand>
</feature>
<feature type="binding site" evidence="1">
    <location>
        <position position="269"/>
    </location>
    <ligand>
        <name>Mg(2+)</name>
        <dbReference type="ChEBI" id="CHEBI:18420"/>
        <label>2</label>
    </ligand>
</feature>
<feature type="binding site" evidence="1">
    <location>
        <position position="269"/>
    </location>
    <ligand>
        <name>Mn(2+)</name>
        <dbReference type="ChEBI" id="CHEBI:29035"/>
        <label>2</label>
    </ligand>
</feature>